<sequence length="222" mass="25746">MAAPVRQTRSLLGWVTTLGPGSRGYRAPPPPRRSREPWWPDPDDPLTPRWQLGPRYAAKQFARHGAASGVDPGSLWPSREQLLELEAEEREWYPSLAVMQESLRVQQLAEEQKRQAREQLIEECMAKMPQMIENWRRQQQARREKAQADKERRARLQAEAQERLGYHVDPRSARFQELLQDLEKQHRKRLKEEKQRKKKEARAAAMAAAAAQDPADSETPDS</sequence>
<dbReference type="EMBL" id="BC126785">
    <property type="protein sequence ID" value="AAI26786.1"/>
    <property type="molecule type" value="mRNA"/>
</dbReference>
<dbReference type="RefSeq" id="NP_001073693.1">
    <property type="nucleotide sequence ID" value="NM_001080224.2"/>
</dbReference>
<dbReference type="SMR" id="A1A4P4"/>
<dbReference type="FunCoup" id="A1A4P4">
    <property type="interactions" value="910"/>
</dbReference>
<dbReference type="STRING" id="9913.ENSBTAP00000020114"/>
<dbReference type="PaxDb" id="9913-ENSBTAP00000020114"/>
<dbReference type="GeneID" id="504718"/>
<dbReference type="KEGG" id="bta:504718"/>
<dbReference type="CTD" id="90480"/>
<dbReference type="eggNOG" id="KOG4848">
    <property type="taxonomic scope" value="Eukaryota"/>
</dbReference>
<dbReference type="HOGENOM" id="CLU_102022_0_0_1"/>
<dbReference type="InParanoid" id="A1A4P4"/>
<dbReference type="OrthoDB" id="6247992at2759"/>
<dbReference type="TreeFam" id="TF323794"/>
<dbReference type="Proteomes" id="UP000009136">
    <property type="component" value="Unplaced"/>
</dbReference>
<dbReference type="GO" id="GO:0005759">
    <property type="term" value="C:mitochondrial matrix"/>
    <property type="evidence" value="ECO:0000304"/>
    <property type="project" value="Reactome"/>
</dbReference>
<dbReference type="GO" id="GO:0005739">
    <property type="term" value="C:mitochondrion"/>
    <property type="evidence" value="ECO:0000318"/>
    <property type="project" value="GO_Central"/>
</dbReference>
<dbReference type="GO" id="GO:0005634">
    <property type="term" value="C:nucleus"/>
    <property type="evidence" value="ECO:0007669"/>
    <property type="project" value="UniProtKB-SubCell"/>
</dbReference>
<dbReference type="GO" id="GO:1990904">
    <property type="term" value="C:ribonucleoprotein complex"/>
    <property type="evidence" value="ECO:0007669"/>
    <property type="project" value="UniProtKB-KW"/>
</dbReference>
<dbReference type="GO" id="GO:0005840">
    <property type="term" value="C:ribosome"/>
    <property type="evidence" value="ECO:0007669"/>
    <property type="project" value="UniProtKB-KW"/>
</dbReference>
<dbReference type="Gene3D" id="6.10.280.120">
    <property type="entry name" value="Growth arrest and DNA-damage-inducible proteins-interacting protein 1"/>
    <property type="match status" value="1"/>
</dbReference>
<dbReference type="InterPro" id="IPR018472">
    <property type="entry name" value="Ribosomal_mL64"/>
</dbReference>
<dbReference type="InterPro" id="IPR043035">
    <property type="entry name" value="Ribosomal_mL64_sf"/>
</dbReference>
<dbReference type="PANTHER" id="PTHR31761">
    <property type="entry name" value="GROWTH ARREST AND DNA DAMAGE-INDUCIBLE PROTEINS-INTERACTING PROTEIN 1 GADD45GIP1"/>
    <property type="match status" value="1"/>
</dbReference>
<dbReference type="PANTHER" id="PTHR31761:SF1">
    <property type="entry name" value="LARGE RIBOSOMAL SUBUNIT PROTEIN ML64"/>
    <property type="match status" value="1"/>
</dbReference>
<dbReference type="Pfam" id="PF10147">
    <property type="entry name" value="CR6_interact"/>
    <property type="match status" value="1"/>
</dbReference>
<evidence type="ECO:0000250" key="1">
    <source>
        <dbReference type="UniProtKB" id="Q8TAE8"/>
    </source>
</evidence>
<evidence type="ECO:0000255" key="2"/>
<evidence type="ECO:0000256" key="3">
    <source>
        <dbReference type="SAM" id="MobiDB-lite"/>
    </source>
</evidence>
<evidence type="ECO:0000305" key="4"/>
<keyword id="KW-0131">Cell cycle</keyword>
<keyword id="KW-0175">Coiled coil</keyword>
<keyword id="KW-0496">Mitochondrion</keyword>
<keyword id="KW-0539">Nucleus</keyword>
<keyword id="KW-1185">Reference proteome</keyword>
<keyword id="KW-0687">Ribonucleoprotein</keyword>
<keyword id="KW-0689">Ribosomal protein</keyword>
<accession>A1A4P4</accession>
<gene>
    <name type="primary">GADD45GIP1</name>
    <name type="synonym">MRPL59</name>
</gene>
<organism>
    <name type="scientific">Bos taurus</name>
    <name type="common">Bovine</name>
    <dbReference type="NCBI Taxonomy" id="9913"/>
    <lineage>
        <taxon>Eukaryota</taxon>
        <taxon>Metazoa</taxon>
        <taxon>Chordata</taxon>
        <taxon>Craniata</taxon>
        <taxon>Vertebrata</taxon>
        <taxon>Euteleostomi</taxon>
        <taxon>Mammalia</taxon>
        <taxon>Eutheria</taxon>
        <taxon>Laurasiatheria</taxon>
        <taxon>Artiodactyla</taxon>
        <taxon>Ruminantia</taxon>
        <taxon>Pecora</taxon>
        <taxon>Bovidae</taxon>
        <taxon>Bovinae</taxon>
        <taxon>Bos</taxon>
    </lineage>
</organism>
<reference key="1">
    <citation type="submission" date="2006-10" db="EMBL/GenBank/DDBJ databases">
        <authorList>
            <consortium name="NIH - Mammalian Gene Collection (MGC) project"/>
        </authorList>
    </citation>
    <scope>NUCLEOTIDE SEQUENCE [LARGE SCALE MRNA]</scope>
    <source>
        <strain>Hereford</strain>
        <tissue>Fetal pons</tissue>
    </source>
</reference>
<name>G45IP_BOVIN</name>
<comment type="function">
    <text evidence="1">Acts as a negative regulator of G1 to S cell cycle phase progression by inhibiting cyclin-dependent kinases. Inhibitory effects are additive with GADD45 proteins but also occur in the absence of GADD45 proteins. Acts as a repressor of the orphan nuclear receptor NR4A1 by inhibiting AB domain-mediated transcriptional activity. May be involved in the hormone-mediated regulation of NR4A1 transcriptional activity. May play a role in mitochondrial protein synthesis.</text>
</comment>
<comment type="subunit">
    <text evidence="1">Component of the mitochondrial ribosome large subunit (39S) which comprises a 16S rRNA and about 50 distinct proteins. Interacts with GADD45A, GADD45B and GADD45G. Interacts with NR4A1 via the NR4A1 AB domain. Interacts with ATAD3A and ATAD3B.</text>
</comment>
<comment type="subcellular location">
    <subcellularLocation>
        <location evidence="1">Mitochondrion</location>
    </subcellularLocation>
    <subcellularLocation>
        <location evidence="1">Nucleus</location>
    </subcellularLocation>
    <text evidence="1">Using N-terminally tagged constructs, has been found in the nucleus. C-terminally tagged constructs are targeted exclusively to mitochondria. This discrepancy may be explained by masking of a potential N-terminal mitochondrial targeting signal by the tag.</text>
</comment>
<comment type="similarity">
    <text evidence="4">Belongs to the mitochondrion-specific ribosomal protein mL64 family.</text>
</comment>
<feature type="chain" id="PRO_0000317428" description="Large ribosomal subunit protein mL64">
    <location>
        <begin position="1"/>
        <end position="222"/>
    </location>
</feature>
<feature type="region of interest" description="Disordered" evidence="3">
    <location>
        <begin position="1"/>
        <end position="51"/>
    </location>
</feature>
<feature type="region of interest" description="Disordered" evidence="3">
    <location>
        <begin position="136"/>
        <end position="170"/>
    </location>
</feature>
<feature type="region of interest" description="Disordered" evidence="3">
    <location>
        <begin position="182"/>
        <end position="222"/>
    </location>
</feature>
<feature type="coiled-coil region" evidence="2">
    <location>
        <begin position="144"/>
        <end position="213"/>
    </location>
</feature>
<feature type="short sequence motif" description="Nuclear localization signal" evidence="2">
    <location>
        <begin position="184"/>
        <end position="200"/>
    </location>
</feature>
<feature type="compositionally biased region" description="Basic and acidic residues" evidence="3">
    <location>
        <begin position="141"/>
        <end position="170"/>
    </location>
</feature>
<feature type="compositionally biased region" description="Low complexity" evidence="3">
    <location>
        <begin position="203"/>
        <end position="212"/>
    </location>
</feature>
<proteinExistence type="evidence at transcript level"/>
<protein>
    <recommendedName>
        <fullName evidence="4">Large ribosomal subunit protein mL64</fullName>
    </recommendedName>
    <alternativeName>
        <fullName>39S ribosomal protein L59, mitochondrial</fullName>
        <shortName>MRP-L59</shortName>
    </alternativeName>
    <alternativeName>
        <fullName>Growth arrest and DNA damage-inducible proteins-interacting protein 1</fullName>
    </alternativeName>
</protein>